<proteinExistence type="inferred from homology"/>
<comment type="cofactor">
    <cofactor evidence="2">
        <name>Fe(3+)</name>
        <dbReference type="ChEBI" id="CHEBI:29034"/>
    </cofactor>
</comment>
<comment type="similarity">
    <text evidence="3">Belongs to the YmdB-like family.</text>
</comment>
<keyword id="KW-0378">Hydrolase</keyword>
<keyword id="KW-0408">Iron</keyword>
<keyword id="KW-0479">Metal-binding</keyword>
<keyword id="KW-1185">Reference proteome</keyword>
<evidence type="ECO:0000250" key="1">
    <source>
        <dbReference type="UniProtKB" id="O31775"/>
    </source>
</evidence>
<evidence type="ECO:0000250" key="2">
    <source>
        <dbReference type="UniProtKB" id="P75429"/>
    </source>
</evidence>
<evidence type="ECO:0000305" key="3"/>
<gene>
    <name type="ordered locus">MG246</name>
</gene>
<organism>
    <name type="scientific">Mycoplasma genitalium (strain ATCC 33530 / DSM 19775 / NCTC 10195 / G37)</name>
    <name type="common">Mycoplasmoides genitalium</name>
    <dbReference type="NCBI Taxonomy" id="243273"/>
    <lineage>
        <taxon>Bacteria</taxon>
        <taxon>Bacillati</taxon>
        <taxon>Mycoplasmatota</taxon>
        <taxon>Mycoplasmoidales</taxon>
        <taxon>Mycoplasmoidaceae</taxon>
        <taxon>Mycoplasmoides</taxon>
    </lineage>
</organism>
<reference key="1">
    <citation type="journal article" date="1995" name="Science">
        <title>The minimal gene complement of Mycoplasma genitalium.</title>
        <authorList>
            <person name="Fraser C.M."/>
            <person name="Gocayne J.D."/>
            <person name="White O."/>
            <person name="Adams M.D."/>
            <person name="Clayton R.A."/>
            <person name="Fleischmann R.D."/>
            <person name="Bult C.J."/>
            <person name="Kerlavage A.R."/>
            <person name="Sutton G.G."/>
            <person name="Kelley J.M."/>
            <person name="Fritchman J.L."/>
            <person name="Weidman J.F."/>
            <person name="Small K.V."/>
            <person name="Sandusky M."/>
            <person name="Fuhrmann J.L."/>
            <person name="Nguyen D.T."/>
            <person name="Utterback T.R."/>
            <person name="Saudek D.M."/>
            <person name="Phillips C.A."/>
            <person name="Merrick J.M."/>
            <person name="Tomb J.-F."/>
            <person name="Dougherty B.A."/>
            <person name="Bott K.F."/>
            <person name="Hu P.-C."/>
            <person name="Lucier T.S."/>
            <person name="Peterson S.N."/>
            <person name="Smith H.O."/>
            <person name="Hutchison C.A. III"/>
            <person name="Venter J.C."/>
        </authorList>
    </citation>
    <scope>NUCLEOTIDE SEQUENCE [LARGE SCALE GENOMIC DNA]</scope>
    <source>
        <strain>ATCC 33530 / DSM 19775 / NCTC 10195 / G37</strain>
    </source>
</reference>
<dbReference type="EC" id="3.1.-.-" evidence="3"/>
<dbReference type="EMBL" id="L43967">
    <property type="protein sequence ID" value="AAC71466.1"/>
    <property type="molecule type" value="Genomic_DNA"/>
</dbReference>
<dbReference type="PIR" id="B64227">
    <property type="entry name" value="B64227"/>
</dbReference>
<dbReference type="RefSeq" id="WP_010869391.1">
    <property type="nucleotide sequence ID" value="NC_000908.2"/>
</dbReference>
<dbReference type="SMR" id="P47488"/>
<dbReference type="FunCoup" id="P47488">
    <property type="interactions" value="27"/>
</dbReference>
<dbReference type="STRING" id="243273.MG_246"/>
<dbReference type="GeneID" id="88282392"/>
<dbReference type="KEGG" id="mge:MG_246"/>
<dbReference type="eggNOG" id="COG1692">
    <property type="taxonomic scope" value="Bacteria"/>
</dbReference>
<dbReference type="HOGENOM" id="CLU_068238_0_0_14"/>
<dbReference type="InParanoid" id="P47488"/>
<dbReference type="OrthoDB" id="9801109at2"/>
<dbReference type="BioCyc" id="MGEN243273:G1GJ2-293-MONOMER"/>
<dbReference type="Proteomes" id="UP000000807">
    <property type="component" value="Chromosome"/>
</dbReference>
<dbReference type="GO" id="GO:0004113">
    <property type="term" value="F:2',3'-cyclic-nucleotide 3'-phosphodiesterase activity"/>
    <property type="evidence" value="ECO:0000318"/>
    <property type="project" value="GO_Central"/>
</dbReference>
<dbReference type="GO" id="GO:0046872">
    <property type="term" value="F:metal ion binding"/>
    <property type="evidence" value="ECO:0007669"/>
    <property type="project" value="UniProtKB-KW"/>
</dbReference>
<dbReference type="FunFam" id="3.60.21.10:FF:000016">
    <property type="entry name" value="Putative metallophosphoesterase"/>
    <property type="match status" value="1"/>
</dbReference>
<dbReference type="Gene3D" id="3.60.21.10">
    <property type="match status" value="1"/>
</dbReference>
<dbReference type="InterPro" id="IPR029052">
    <property type="entry name" value="Metallo-depent_PP-like"/>
</dbReference>
<dbReference type="InterPro" id="IPR005235">
    <property type="entry name" value="YmdB-like"/>
</dbReference>
<dbReference type="NCBIfam" id="TIGR00282">
    <property type="entry name" value="TIGR00282 family metallophosphoesterase"/>
    <property type="match status" value="1"/>
</dbReference>
<dbReference type="PANTHER" id="PTHR36303">
    <property type="entry name" value="2',3'-CYCLIC-NUCLEOTIDE 2'-PHOSPHODIESTERASE"/>
    <property type="match status" value="1"/>
</dbReference>
<dbReference type="PANTHER" id="PTHR36303:SF1">
    <property type="entry name" value="2',3'-CYCLIC-NUCLEOTIDE 2'-PHOSPHODIESTERASE"/>
    <property type="match status" value="1"/>
</dbReference>
<dbReference type="Pfam" id="PF13277">
    <property type="entry name" value="YmdB"/>
    <property type="match status" value="1"/>
</dbReference>
<dbReference type="PIRSF" id="PIRSF004789">
    <property type="entry name" value="DR1281"/>
    <property type="match status" value="1"/>
</dbReference>
<dbReference type="SUPFAM" id="SSF56300">
    <property type="entry name" value="Metallo-dependent phosphatases"/>
    <property type="match status" value="1"/>
</dbReference>
<sequence>MDNIKVLFLGDVYGKAGRKIISDHLPIIKKKYQLNLIIANAENTTNGKGLSWNHYQILKQAGIDYITMGNHTWFQKQDLELVLNQVDVIRPLNLMQDFNYFQLGKGSYLFSLNGLKIRITNLLGTSINLPFAITNPFVELKKLVLTKDCDLHIVDFHAETTSEKNAFCMVFDGYVTAILGTHTHVPSNDLRITPKGSVYITDVGMCGPGFGSVIGANPKQSIKLFCTGERQFFEVSNCGAQLNGVFFEVCSKTNQVVKIEQIRIVLDDEKYLANDYFNLVE</sequence>
<protein>
    <recommendedName>
        <fullName evidence="3">Putative phosphatase/phosphodiesterase MG246</fullName>
        <ecNumber evidence="3">3.1.-.-</ecNumber>
    </recommendedName>
</protein>
<name>Y246_MYCGE</name>
<accession>P47488</accession>
<feature type="chain" id="PRO_0000210485" description="Putative phosphatase/phosphodiesterase MG246">
    <location>
        <begin position="1"/>
        <end position="281"/>
    </location>
</feature>
<feature type="active site" description="Proton donor" evidence="1">
    <location>
        <position position="71"/>
    </location>
</feature>
<feature type="binding site" evidence="2">
    <location>
        <position position="11"/>
    </location>
    <ligand>
        <name>Fe cation</name>
        <dbReference type="ChEBI" id="CHEBI:24875"/>
        <label>1</label>
    </ligand>
</feature>
<feature type="binding site" evidence="2">
    <location>
        <position position="42"/>
    </location>
    <ligand>
        <name>Fe cation</name>
        <dbReference type="ChEBI" id="CHEBI:24875"/>
        <label>1</label>
    </ligand>
</feature>
<feature type="binding site" evidence="2">
    <location>
        <position position="42"/>
    </location>
    <ligand>
        <name>Fe cation</name>
        <dbReference type="ChEBI" id="CHEBI:24875"/>
        <label>2</label>
    </ligand>
</feature>
<feature type="binding site" evidence="2">
    <location>
        <position position="43"/>
    </location>
    <ligand>
        <name>Fe cation</name>
        <dbReference type="ChEBI" id="CHEBI:24875"/>
        <label>1</label>
    </ligand>
</feature>
<feature type="binding site" evidence="2">
    <location>
        <position position="70"/>
    </location>
    <ligand>
        <name>Fe cation</name>
        <dbReference type="ChEBI" id="CHEBI:24875"/>
        <label>2</label>
    </ligand>
</feature>
<feature type="binding site" evidence="2">
    <location>
        <position position="157"/>
    </location>
    <ligand>
        <name>Fe cation</name>
        <dbReference type="ChEBI" id="CHEBI:24875"/>
        <label>2</label>
    </ligand>
</feature>
<feature type="binding site" evidence="2">
    <location>
        <position position="182"/>
    </location>
    <ligand>
        <name>Fe cation</name>
        <dbReference type="ChEBI" id="CHEBI:24875"/>
        <label>2</label>
    </ligand>
</feature>
<feature type="binding site" evidence="2">
    <location>
        <position position="184"/>
    </location>
    <ligand>
        <name>Fe cation</name>
        <dbReference type="ChEBI" id="CHEBI:24875"/>
        <label>1</label>
    </ligand>
</feature>